<evidence type="ECO:0000256" key="1">
    <source>
        <dbReference type="SAM" id="MobiDB-lite"/>
    </source>
</evidence>
<evidence type="ECO:0000305" key="2"/>
<name>RFA2_SCHPO</name>
<protein>
    <recommendedName>
        <fullName>Replication factor A protein 2</fullName>
    </recommendedName>
    <alternativeName>
        <fullName>Single-stranded DNA-binding protein P30 subunit</fullName>
    </alternativeName>
</protein>
<feature type="chain" id="PRO_0000097274" description="Replication factor A protein 2">
    <location>
        <begin position="1"/>
        <end position="279"/>
    </location>
</feature>
<feature type="DNA-binding region" description="OB">
    <location>
        <begin position="80"/>
        <end position="140"/>
    </location>
</feature>
<feature type="region of interest" description="Disordered" evidence="1">
    <location>
        <begin position="26"/>
        <end position="47"/>
    </location>
</feature>
<feature type="compositionally biased region" description="Polar residues" evidence="1">
    <location>
        <begin position="32"/>
        <end position="46"/>
    </location>
</feature>
<dbReference type="EMBL" id="U59386">
    <property type="protein sequence ID" value="AAC49438.1"/>
    <property type="molecule type" value="mRNA"/>
</dbReference>
<dbReference type="EMBL" id="CU329672">
    <property type="protein sequence ID" value="CAA21823.2"/>
    <property type="molecule type" value="Genomic_DNA"/>
</dbReference>
<dbReference type="PIR" id="T41124">
    <property type="entry name" value="T41124"/>
</dbReference>
<dbReference type="RefSeq" id="NP_588227.2">
    <property type="nucleotide sequence ID" value="NM_001023217.2"/>
</dbReference>
<dbReference type="SMR" id="Q92373"/>
<dbReference type="BioGRID" id="275362">
    <property type="interactions" value="6"/>
</dbReference>
<dbReference type="DIP" id="DIP-29238N"/>
<dbReference type="FunCoup" id="Q92373">
    <property type="interactions" value="541"/>
</dbReference>
<dbReference type="IntAct" id="Q92373">
    <property type="interactions" value="1"/>
</dbReference>
<dbReference type="STRING" id="284812.Q92373"/>
<dbReference type="iPTMnet" id="Q92373"/>
<dbReference type="PaxDb" id="4896-SPCC1753.01c.1"/>
<dbReference type="EnsemblFungi" id="SPCC1753.01c.1">
    <property type="protein sequence ID" value="SPCC1753.01c.1:pep"/>
    <property type="gene ID" value="SPCC1753.01c"/>
</dbReference>
<dbReference type="GeneID" id="2538781"/>
<dbReference type="KEGG" id="spo:2538781"/>
<dbReference type="PomBase" id="SPCC1753.01c">
    <property type="gene designation" value="ssb2"/>
</dbReference>
<dbReference type="VEuPathDB" id="FungiDB:SPCC1753.01c"/>
<dbReference type="eggNOG" id="KOG3108">
    <property type="taxonomic scope" value="Eukaryota"/>
</dbReference>
<dbReference type="HOGENOM" id="CLU_051033_0_1_1"/>
<dbReference type="InParanoid" id="Q92373"/>
<dbReference type="OMA" id="TFHFIDC"/>
<dbReference type="PhylomeDB" id="Q92373"/>
<dbReference type="Reactome" id="R-SPO-110312">
    <property type="pathway name" value="Translesion synthesis by REV1"/>
</dbReference>
<dbReference type="Reactome" id="R-SPO-110314">
    <property type="pathway name" value="Recognition of DNA damage by PCNA-containing replication complex"/>
</dbReference>
<dbReference type="Reactome" id="R-SPO-110320">
    <property type="pathway name" value="Translesion Synthesis by POLH"/>
</dbReference>
<dbReference type="Reactome" id="R-SPO-174437">
    <property type="pathway name" value="Removal of the Flap Intermediate from the C-strand"/>
</dbReference>
<dbReference type="Reactome" id="R-SPO-176187">
    <property type="pathway name" value="Activation of ATR in response to replication stress"/>
</dbReference>
<dbReference type="Reactome" id="R-SPO-3371453">
    <property type="pathway name" value="Regulation of HSF1-mediated heat shock response"/>
</dbReference>
<dbReference type="Reactome" id="R-SPO-5358565">
    <property type="pathway name" value="Mismatch repair (MMR) directed by MSH2:MSH6 (MutSalpha)"/>
</dbReference>
<dbReference type="Reactome" id="R-SPO-5358606">
    <property type="pathway name" value="Mismatch repair (MMR) directed by MSH2:MSH3 (MutSbeta)"/>
</dbReference>
<dbReference type="Reactome" id="R-SPO-5651801">
    <property type="pathway name" value="PCNA-Dependent Long Patch Base Excision Repair"/>
</dbReference>
<dbReference type="Reactome" id="R-SPO-5655862">
    <property type="pathway name" value="Translesion synthesis by POLK"/>
</dbReference>
<dbReference type="Reactome" id="R-SPO-5656121">
    <property type="pathway name" value="Translesion synthesis by POLI"/>
</dbReference>
<dbReference type="Reactome" id="R-SPO-5656169">
    <property type="pathway name" value="Termination of translesion DNA synthesis"/>
</dbReference>
<dbReference type="Reactome" id="R-SPO-5696395">
    <property type="pathway name" value="Formation of Incision Complex in GG-NER"/>
</dbReference>
<dbReference type="Reactome" id="R-SPO-5696397">
    <property type="pathway name" value="Gap-filling DNA repair synthesis and ligation in GG-NER"/>
</dbReference>
<dbReference type="Reactome" id="R-SPO-5696400">
    <property type="pathway name" value="Dual Incision in GG-NER"/>
</dbReference>
<dbReference type="Reactome" id="R-SPO-6782135">
    <property type="pathway name" value="Dual incision in TC-NER"/>
</dbReference>
<dbReference type="Reactome" id="R-SPO-6782210">
    <property type="pathway name" value="Gap-filling DNA repair synthesis and ligation in TC-NER"/>
</dbReference>
<dbReference type="Reactome" id="R-SPO-68962">
    <property type="pathway name" value="Activation of the pre-replicative complex"/>
</dbReference>
<dbReference type="Reactome" id="R-SPO-69166">
    <property type="pathway name" value="Removal of the Flap Intermediate"/>
</dbReference>
<dbReference type="PRO" id="PR:Q92373"/>
<dbReference type="Proteomes" id="UP000002485">
    <property type="component" value="Chromosome III"/>
</dbReference>
<dbReference type="GO" id="GO:0000781">
    <property type="term" value="C:chromosome, telomeric region"/>
    <property type="evidence" value="ECO:0000318"/>
    <property type="project" value="GO_Central"/>
</dbReference>
<dbReference type="GO" id="GO:0005829">
    <property type="term" value="C:cytosol"/>
    <property type="evidence" value="ECO:0007005"/>
    <property type="project" value="PomBase"/>
</dbReference>
<dbReference type="GO" id="GO:0005662">
    <property type="term" value="C:DNA replication factor A complex"/>
    <property type="evidence" value="ECO:0000314"/>
    <property type="project" value="PomBase"/>
</dbReference>
<dbReference type="GO" id="GO:0005634">
    <property type="term" value="C:nucleus"/>
    <property type="evidence" value="ECO:0007005"/>
    <property type="project" value="PomBase"/>
</dbReference>
<dbReference type="GO" id="GO:0005736">
    <property type="term" value="C:RNA polymerase I complex"/>
    <property type="evidence" value="ECO:0000314"/>
    <property type="project" value="PomBase"/>
</dbReference>
<dbReference type="GO" id="GO:0035861">
    <property type="term" value="C:site of double-strand break"/>
    <property type="evidence" value="ECO:0000314"/>
    <property type="project" value="PomBase"/>
</dbReference>
<dbReference type="GO" id="GO:0042162">
    <property type="term" value="F:telomeric DNA binding"/>
    <property type="evidence" value="ECO:0000318"/>
    <property type="project" value="GO_Central"/>
</dbReference>
<dbReference type="GO" id="GO:0006260">
    <property type="term" value="P:DNA replication"/>
    <property type="evidence" value="ECO:0000318"/>
    <property type="project" value="GO_Central"/>
</dbReference>
<dbReference type="GO" id="GO:0006269">
    <property type="term" value="P:DNA replication, synthesis of primer"/>
    <property type="evidence" value="ECO:0000266"/>
    <property type="project" value="PomBase"/>
</dbReference>
<dbReference type="GO" id="GO:0000724">
    <property type="term" value="P:double-strand break repair via homologous recombination"/>
    <property type="evidence" value="ECO:0000318"/>
    <property type="project" value="GO_Central"/>
</dbReference>
<dbReference type="GO" id="GO:0006289">
    <property type="term" value="P:nucleotide-excision repair"/>
    <property type="evidence" value="ECO:0000318"/>
    <property type="project" value="GO_Central"/>
</dbReference>
<dbReference type="GO" id="GO:0006362">
    <property type="term" value="P:transcription elongation by RNA polymerase I"/>
    <property type="evidence" value="ECO:0000269"/>
    <property type="project" value="PomBase"/>
</dbReference>
<dbReference type="CDD" id="cd04478">
    <property type="entry name" value="RPA2_DBD_D"/>
    <property type="match status" value="1"/>
</dbReference>
<dbReference type="FunFam" id="1.10.10.10:FF:000168">
    <property type="entry name" value="Replication protein A 32 kDa subunit"/>
    <property type="match status" value="1"/>
</dbReference>
<dbReference type="Gene3D" id="2.40.50.140">
    <property type="entry name" value="Nucleic acid-binding proteins"/>
    <property type="match status" value="1"/>
</dbReference>
<dbReference type="Gene3D" id="1.10.10.10">
    <property type="entry name" value="Winged helix-like DNA-binding domain superfamily/Winged helix DNA-binding domain"/>
    <property type="match status" value="1"/>
</dbReference>
<dbReference type="InterPro" id="IPR012340">
    <property type="entry name" value="NA-bd_OB-fold"/>
</dbReference>
<dbReference type="InterPro" id="IPR004365">
    <property type="entry name" value="NA-bd_OB_tRNA"/>
</dbReference>
<dbReference type="InterPro" id="IPR040260">
    <property type="entry name" value="RFA2-like"/>
</dbReference>
<dbReference type="InterPro" id="IPR014646">
    <property type="entry name" value="Rfa2/RPA32"/>
</dbReference>
<dbReference type="InterPro" id="IPR014892">
    <property type="entry name" value="RPA_C"/>
</dbReference>
<dbReference type="InterPro" id="IPR036388">
    <property type="entry name" value="WH-like_DNA-bd_sf"/>
</dbReference>
<dbReference type="InterPro" id="IPR036390">
    <property type="entry name" value="WH_DNA-bd_sf"/>
</dbReference>
<dbReference type="PANTHER" id="PTHR13989">
    <property type="entry name" value="REPLICATION PROTEIN A-RELATED"/>
    <property type="match status" value="1"/>
</dbReference>
<dbReference type="PANTHER" id="PTHR13989:SF16">
    <property type="entry name" value="REPLICATION PROTEIN A2"/>
    <property type="match status" value="1"/>
</dbReference>
<dbReference type="Pfam" id="PF08784">
    <property type="entry name" value="RPA_C"/>
    <property type="match status" value="1"/>
</dbReference>
<dbReference type="Pfam" id="PF01336">
    <property type="entry name" value="tRNA_anti-codon"/>
    <property type="match status" value="1"/>
</dbReference>
<dbReference type="PIRSF" id="PIRSF036949">
    <property type="entry name" value="RPA32"/>
    <property type="match status" value="1"/>
</dbReference>
<dbReference type="SUPFAM" id="SSF50249">
    <property type="entry name" value="Nucleic acid-binding proteins"/>
    <property type="match status" value="1"/>
</dbReference>
<dbReference type="SUPFAM" id="SSF46785">
    <property type="entry name" value="Winged helix' DNA-binding domain"/>
    <property type="match status" value="1"/>
</dbReference>
<gene>
    <name type="primary">ssb2</name>
    <name type="ORF">SPCC1753.01c</name>
    <name type="ORF">SPCC584.06c</name>
</gene>
<accession>Q92373</accession>
<comment type="function">
    <text>Binds to single-stranded sequences.</text>
</comment>
<comment type="subunit">
    <text>Heterotrimer of 68, 30, and 12 kDa chains.</text>
</comment>
<comment type="subcellular location">
    <subcellularLocation>
        <location>Nucleus</location>
    </subcellularLocation>
</comment>
<comment type="PTM">
    <text>Phosphorylated in a cell cycle-dependent manner. Hypophosphorylated in G1, becomes phosphorylated at the G1/S boundary, it is maintained in this state through the M phase.</text>
</comment>
<comment type="similarity">
    <text evidence="2">Belongs to the replication factor A protein 2 family.</text>
</comment>
<organism>
    <name type="scientific">Schizosaccharomyces pombe (strain 972 / ATCC 24843)</name>
    <name type="common">Fission yeast</name>
    <dbReference type="NCBI Taxonomy" id="284812"/>
    <lineage>
        <taxon>Eukaryota</taxon>
        <taxon>Fungi</taxon>
        <taxon>Dikarya</taxon>
        <taxon>Ascomycota</taxon>
        <taxon>Taphrinomycotina</taxon>
        <taxon>Schizosaccharomycetes</taxon>
        <taxon>Schizosaccharomycetales</taxon>
        <taxon>Schizosaccharomycetaceae</taxon>
        <taxon>Schizosaccharomyces</taxon>
    </lineage>
</organism>
<proteinExistence type="evidence at protein level"/>
<reference key="1">
    <citation type="journal article" date="1996" name="J. Biol. Chem.">
        <title>Purification, gene cloning, and reconstitution of the heterotrimeric single-stranded DNA-binding protein from Schizosaccharomyces pombe.</title>
        <authorList>
            <person name="Ishiai M."/>
            <person name="Sanchez J.P."/>
            <person name="Amin A.A."/>
            <person name="Murakami Y."/>
            <person name="Hurwitz J."/>
        </authorList>
    </citation>
    <scope>NUCLEOTIDE SEQUENCE [MRNA]</scope>
    <scope>PARTIAL PROTEIN SEQUENCE</scope>
</reference>
<reference key="2">
    <citation type="journal article" date="2002" name="Nature">
        <title>The genome sequence of Schizosaccharomyces pombe.</title>
        <authorList>
            <person name="Wood V."/>
            <person name="Gwilliam R."/>
            <person name="Rajandream M.A."/>
            <person name="Lyne M.H."/>
            <person name="Lyne R."/>
            <person name="Stewart A."/>
            <person name="Sgouros J.G."/>
            <person name="Peat N."/>
            <person name="Hayles J."/>
            <person name="Baker S.G."/>
            <person name="Basham D."/>
            <person name="Bowman S."/>
            <person name="Brooks K."/>
            <person name="Brown D."/>
            <person name="Brown S."/>
            <person name="Chillingworth T."/>
            <person name="Churcher C.M."/>
            <person name="Collins M."/>
            <person name="Connor R."/>
            <person name="Cronin A."/>
            <person name="Davis P."/>
            <person name="Feltwell T."/>
            <person name="Fraser A."/>
            <person name="Gentles S."/>
            <person name="Goble A."/>
            <person name="Hamlin N."/>
            <person name="Harris D.E."/>
            <person name="Hidalgo J."/>
            <person name="Hodgson G."/>
            <person name="Holroyd S."/>
            <person name="Hornsby T."/>
            <person name="Howarth S."/>
            <person name="Huckle E.J."/>
            <person name="Hunt S."/>
            <person name="Jagels K."/>
            <person name="James K.D."/>
            <person name="Jones L."/>
            <person name="Jones M."/>
            <person name="Leather S."/>
            <person name="McDonald S."/>
            <person name="McLean J."/>
            <person name="Mooney P."/>
            <person name="Moule S."/>
            <person name="Mungall K.L."/>
            <person name="Murphy L.D."/>
            <person name="Niblett D."/>
            <person name="Odell C."/>
            <person name="Oliver K."/>
            <person name="O'Neil S."/>
            <person name="Pearson D."/>
            <person name="Quail M.A."/>
            <person name="Rabbinowitsch E."/>
            <person name="Rutherford K.M."/>
            <person name="Rutter S."/>
            <person name="Saunders D."/>
            <person name="Seeger K."/>
            <person name="Sharp S."/>
            <person name="Skelton J."/>
            <person name="Simmonds M.N."/>
            <person name="Squares R."/>
            <person name="Squares S."/>
            <person name="Stevens K."/>
            <person name="Taylor K."/>
            <person name="Taylor R.G."/>
            <person name="Tivey A."/>
            <person name="Walsh S.V."/>
            <person name="Warren T."/>
            <person name="Whitehead S."/>
            <person name="Woodward J.R."/>
            <person name="Volckaert G."/>
            <person name="Aert R."/>
            <person name="Robben J."/>
            <person name="Grymonprez B."/>
            <person name="Weltjens I."/>
            <person name="Vanstreels E."/>
            <person name="Rieger M."/>
            <person name="Schaefer M."/>
            <person name="Mueller-Auer S."/>
            <person name="Gabel C."/>
            <person name="Fuchs M."/>
            <person name="Duesterhoeft A."/>
            <person name="Fritzc C."/>
            <person name="Holzer E."/>
            <person name="Moestl D."/>
            <person name="Hilbert H."/>
            <person name="Borzym K."/>
            <person name="Langer I."/>
            <person name="Beck A."/>
            <person name="Lehrach H."/>
            <person name="Reinhardt R."/>
            <person name="Pohl T.M."/>
            <person name="Eger P."/>
            <person name="Zimmermann W."/>
            <person name="Wedler H."/>
            <person name="Wambutt R."/>
            <person name="Purnelle B."/>
            <person name="Goffeau A."/>
            <person name="Cadieu E."/>
            <person name="Dreano S."/>
            <person name="Gloux S."/>
            <person name="Lelaure V."/>
            <person name="Mottier S."/>
            <person name="Galibert F."/>
            <person name="Aves S.J."/>
            <person name="Xiang Z."/>
            <person name="Hunt C."/>
            <person name="Moore K."/>
            <person name="Hurst S.M."/>
            <person name="Lucas M."/>
            <person name="Rochet M."/>
            <person name="Gaillardin C."/>
            <person name="Tallada V.A."/>
            <person name="Garzon A."/>
            <person name="Thode G."/>
            <person name="Daga R.R."/>
            <person name="Cruzado L."/>
            <person name="Jimenez J."/>
            <person name="Sanchez M."/>
            <person name="del Rey F."/>
            <person name="Benito J."/>
            <person name="Dominguez A."/>
            <person name="Revuelta J.L."/>
            <person name="Moreno S."/>
            <person name="Armstrong J."/>
            <person name="Forsburg S.L."/>
            <person name="Cerutti L."/>
            <person name="Lowe T."/>
            <person name="McCombie W.R."/>
            <person name="Paulsen I."/>
            <person name="Potashkin J."/>
            <person name="Shpakovski G.V."/>
            <person name="Ussery D."/>
            <person name="Barrell B.G."/>
            <person name="Nurse P."/>
        </authorList>
    </citation>
    <scope>NUCLEOTIDE SEQUENCE [LARGE SCALE GENOMIC DNA]</scope>
    <source>
        <strain>972 / ATCC 24843</strain>
    </source>
</reference>
<keyword id="KW-0903">Direct protein sequencing</keyword>
<keyword id="KW-0235">DNA replication</keyword>
<keyword id="KW-0238">DNA-binding</keyword>
<keyword id="KW-0539">Nucleus</keyword>
<keyword id="KW-0597">Phosphoprotein</keyword>
<keyword id="KW-1185">Reference proteome</keyword>
<sequence length="279" mass="30391">MAYDAFGKPGYGPDFNSAFSPGMGGGAGFNEYDQSSQPSVDRQQGAGNKLRPVTIKQILNASQVHADAEFKIDGVEVGQVTFVGVLRNIHAQTTNTTYQIEDGTGMIEVRHWEHIDALSELATDTYVRVYGNIKIFSGKIYIASQYIRTIKDHNEVHFHFLEAIAVHLHFTQKANAVNGANAPGYGTSNALGYNNISSNGAANSLEQKLAEYSLTPAQMTVMQAIHSAPETNEGVHVRQLAQSVGPGIDLTAVTDFLQQEGIIYTTIDENHFKSVLQDQ</sequence>